<reference key="1">
    <citation type="journal article" date="1997" name="Plant Sci.">
        <title>Plastid DNA of five ecotypes of Arabidopsis thaliana: sequence of ndhG gene and maternal inheritance.</title>
        <authorList>
            <person name="Martinez P."/>
            <person name="Lopez C."/>
            <person name="Roldan M."/>
            <person name="Sabater B."/>
            <person name="Martin M."/>
        </authorList>
    </citation>
    <scope>NUCLEOTIDE SEQUENCE [GENOMIC DNA]</scope>
    <source>
        <strain>cv. Landsberg erecta</strain>
    </source>
</reference>
<reference key="2">
    <citation type="journal article" date="1999" name="DNA Res.">
        <title>Complete structure of the chloroplast genome of Arabidopsis thaliana.</title>
        <authorList>
            <person name="Sato S."/>
            <person name="Nakamura Y."/>
            <person name="Kaneko T."/>
            <person name="Asamizu E."/>
            <person name="Tabata S."/>
        </authorList>
    </citation>
    <scope>NUCLEOTIDE SEQUENCE [LARGE SCALE GENOMIC DNA]</scope>
    <source>
        <strain>cv. Columbia</strain>
    </source>
</reference>
<gene>
    <name type="primary">ndhG</name>
    <name type="ordered locus">AtCg01080</name>
</gene>
<proteinExistence type="evidence at protein level"/>
<dbReference type="EC" id="7.1.1.-"/>
<dbReference type="EMBL" id="X99278">
    <property type="protein sequence ID" value="CAA67670.1"/>
    <property type="molecule type" value="Genomic_DNA"/>
</dbReference>
<dbReference type="EMBL" id="AP000423">
    <property type="protein sequence ID" value="BAA84440.1"/>
    <property type="molecule type" value="Genomic_DNA"/>
</dbReference>
<dbReference type="RefSeq" id="NP_051112.1">
    <property type="nucleotide sequence ID" value="NC_000932.1"/>
</dbReference>
<dbReference type="PDB" id="7WFF">
    <property type="method" value="EM"/>
    <property type="resolution" value="3.59 A"/>
    <property type="chains" value="G=1-176"/>
</dbReference>
<dbReference type="PDB" id="7WG5">
    <property type="method" value="EM"/>
    <property type="resolution" value="3.89 A"/>
    <property type="chains" value="G=1-176"/>
</dbReference>
<dbReference type="PDBsum" id="7WFF"/>
<dbReference type="PDBsum" id="7WG5"/>
<dbReference type="EMDB" id="EMD-32464"/>
<dbReference type="EMDB" id="EMD-32477"/>
<dbReference type="SMR" id="Q95695"/>
<dbReference type="FunCoup" id="Q95695">
    <property type="interactions" value="16"/>
</dbReference>
<dbReference type="STRING" id="3702.Q95695"/>
<dbReference type="TCDB" id="3.D.1.8.1">
    <property type="family name" value="the h+ or na+-translocating nadh dehydrogenase (ndh) family"/>
</dbReference>
<dbReference type="PaxDb" id="3702-ATCG01080.1"/>
<dbReference type="EnsemblPlants" id="ATCG01080.1">
    <property type="protein sequence ID" value="ATCG01080.1"/>
    <property type="gene ID" value="ATCG01080"/>
</dbReference>
<dbReference type="GeneID" id="844739"/>
<dbReference type="Gramene" id="ATCG01080.1">
    <property type="protein sequence ID" value="ATCG01080.1"/>
    <property type="gene ID" value="ATCG01080"/>
</dbReference>
<dbReference type="KEGG" id="ath:ArthCp077"/>
<dbReference type="Araport" id="ATCG01080"/>
<dbReference type="TAIR" id="ATCG01080">
    <property type="gene designation" value="NDHG"/>
</dbReference>
<dbReference type="eggNOG" id="ENOG502QQHR">
    <property type="taxonomic scope" value="Eukaryota"/>
</dbReference>
<dbReference type="HOGENOM" id="CLU_085957_3_0_1"/>
<dbReference type="InParanoid" id="Q95695"/>
<dbReference type="OMA" id="TSWYGVI"/>
<dbReference type="BioCyc" id="ARA:ATCG01080-MONOMER"/>
<dbReference type="PRO" id="PR:Q95695"/>
<dbReference type="Proteomes" id="UP000006548">
    <property type="component" value="Chloroplast Pltd"/>
</dbReference>
<dbReference type="ExpressionAtlas" id="Q95695">
    <property type="expression patterns" value="baseline and differential"/>
</dbReference>
<dbReference type="GO" id="GO:0009535">
    <property type="term" value="C:chloroplast thylakoid membrane"/>
    <property type="evidence" value="ECO:0007669"/>
    <property type="project" value="UniProtKB-SubCell"/>
</dbReference>
<dbReference type="GO" id="GO:0008137">
    <property type="term" value="F:NADH dehydrogenase (ubiquinone) activity"/>
    <property type="evidence" value="ECO:0007669"/>
    <property type="project" value="InterPro"/>
</dbReference>
<dbReference type="GO" id="GO:0048038">
    <property type="term" value="F:quinone binding"/>
    <property type="evidence" value="ECO:0007669"/>
    <property type="project" value="UniProtKB-KW"/>
</dbReference>
<dbReference type="GO" id="GO:0015979">
    <property type="term" value="P:photosynthesis"/>
    <property type="evidence" value="ECO:0000304"/>
    <property type="project" value="TAIR"/>
</dbReference>
<dbReference type="FunFam" id="1.20.120.1200:FF:000002">
    <property type="entry name" value="NAD(P)H-quinone oxidoreductase subunit 6, chloroplastic"/>
    <property type="match status" value="1"/>
</dbReference>
<dbReference type="Gene3D" id="1.20.120.1200">
    <property type="entry name" value="NADH-ubiquinone/plastoquinone oxidoreductase chain 6, subunit NuoJ"/>
    <property type="match status" value="1"/>
</dbReference>
<dbReference type="InterPro" id="IPR050290">
    <property type="entry name" value="NAD(P)H-Q_Oxidoreduct_6"/>
</dbReference>
<dbReference type="InterPro" id="IPR001457">
    <property type="entry name" value="NADH_UbQ/plastoQ_OxRdtase_su6"/>
</dbReference>
<dbReference type="InterPro" id="IPR042106">
    <property type="entry name" value="Nuo/plastoQ_OxRdtase_6_NuoJ"/>
</dbReference>
<dbReference type="PANTHER" id="PTHR48479">
    <property type="entry name" value="NAD(P)H-QUINONE OXIDOREDUCTASE SUBUNIT 6, CHLOROPLASTIC"/>
    <property type="match status" value="1"/>
</dbReference>
<dbReference type="PANTHER" id="PTHR48479:SF1">
    <property type="entry name" value="NAD(P)H-QUINONE OXIDOREDUCTASE SUBUNIT 6, CHLOROPLASTIC"/>
    <property type="match status" value="1"/>
</dbReference>
<dbReference type="Pfam" id="PF00499">
    <property type="entry name" value="Oxidored_q3"/>
    <property type="match status" value="1"/>
</dbReference>
<feature type="chain" id="PRO_0000118352" description="NAD(P)H-quinone oxidoreductase subunit 6, chloroplastic">
    <location>
        <begin position="1"/>
        <end position="176"/>
    </location>
</feature>
<feature type="transmembrane region" description="Helical" evidence="2">
    <location>
        <begin position="10"/>
        <end position="30"/>
    </location>
</feature>
<feature type="transmembrane region" description="Helical" evidence="2">
    <location>
        <begin position="32"/>
        <end position="52"/>
    </location>
</feature>
<feature type="transmembrane region" description="Helical" evidence="2">
    <location>
        <begin position="61"/>
        <end position="81"/>
    </location>
</feature>
<feature type="transmembrane region" description="Helical" evidence="2">
    <location>
        <begin position="92"/>
        <end position="112"/>
    </location>
</feature>
<feature type="transmembrane region" description="Helical" evidence="2">
    <location>
        <begin position="152"/>
        <end position="172"/>
    </location>
</feature>
<name>NU6C_ARATH</name>
<geneLocation type="chloroplast"/>
<sequence length="176" mass="19214">MDLPGPIHDFLLVFLGSGLLVGGLGVVLLPNPIFSAFSLGFVLVCISLLYILSNSHFVAAAQLLIYVGAINVLIIFAVMFMNDSEYSTDFNLWTIGNGITSLVCTTILFLLMSTILDTSWYGVIWTTKLNQILEQDLISNSQQIGIHLSTDFFLPFELISIILLVALIGAISVARQ</sequence>
<accession>Q95695</accession>
<comment type="function">
    <text evidence="1">NDH shuttles electrons from NAD(P)H:plastoquinone, via FMN and iron-sulfur (Fe-S) centers, to quinones in the photosynthetic chain and possibly in a chloroplast respiratory chain. The immediate electron acceptor for the enzyme in this species is believed to be plastoquinone. Couples the redox reaction to proton translocation, and thus conserves the redox energy in a proton gradient (By similarity).</text>
</comment>
<comment type="catalytic activity">
    <reaction>
        <text>a plastoquinone + NADH + (n+1) H(+)(in) = a plastoquinol + NAD(+) + n H(+)(out)</text>
        <dbReference type="Rhea" id="RHEA:42608"/>
        <dbReference type="Rhea" id="RHEA-COMP:9561"/>
        <dbReference type="Rhea" id="RHEA-COMP:9562"/>
        <dbReference type="ChEBI" id="CHEBI:15378"/>
        <dbReference type="ChEBI" id="CHEBI:17757"/>
        <dbReference type="ChEBI" id="CHEBI:57540"/>
        <dbReference type="ChEBI" id="CHEBI:57945"/>
        <dbReference type="ChEBI" id="CHEBI:62192"/>
    </reaction>
</comment>
<comment type="catalytic activity">
    <reaction>
        <text>a plastoquinone + NADPH + (n+1) H(+)(in) = a plastoquinol + NADP(+) + n H(+)(out)</text>
        <dbReference type="Rhea" id="RHEA:42612"/>
        <dbReference type="Rhea" id="RHEA-COMP:9561"/>
        <dbReference type="Rhea" id="RHEA-COMP:9562"/>
        <dbReference type="ChEBI" id="CHEBI:15378"/>
        <dbReference type="ChEBI" id="CHEBI:17757"/>
        <dbReference type="ChEBI" id="CHEBI:57783"/>
        <dbReference type="ChEBI" id="CHEBI:58349"/>
        <dbReference type="ChEBI" id="CHEBI:62192"/>
    </reaction>
</comment>
<comment type="subunit">
    <text evidence="1">NDH is composed of at least 16 different subunits, 5 of which are encoded in the nucleus.</text>
</comment>
<comment type="subcellular location">
    <subcellularLocation>
        <location evidence="1">Plastid</location>
        <location evidence="1">Chloroplast thylakoid membrane</location>
        <topology evidence="1">Multi-pass membrane protein</topology>
    </subcellularLocation>
</comment>
<comment type="similarity">
    <text evidence="3">Belongs to the complex I subunit 6 family.</text>
</comment>
<organism>
    <name type="scientific">Arabidopsis thaliana</name>
    <name type="common">Mouse-ear cress</name>
    <dbReference type="NCBI Taxonomy" id="3702"/>
    <lineage>
        <taxon>Eukaryota</taxon>
        <taxon>Viridiplantae</taxon>
        <taxon>Streptophyta</taxon>
        <taxon>Embryophyta</taxon>
        <taxon>Tracheophyta</taxon>
        <taxon>Spermatophyta</taxon>
        <taxon>Magnoliopsida</taxon>
        <taxon>eudicotyledons</taxon>
        <taxon>Gunneridae</taxon>
        <taxon>Pentapetalae</taxon>
        <taxon>rosids</taxon>
        <taxon>malvids</taxon>
        <taxon>Brassicales</taxon>
        <taxon>Brassicaceae</taxon>
        <taxon>Camelineae</taxon>
        <taxon>Arabidopsis</taxon>
    </lineage>
</organism>
<evidence type="ECO:0000250" key="1"/>
<evidence type="ECO:0000255" key="2"/>
<evidence type="ECO:0000305" key="3"/>
<protein>
    <recommendedName>
        <fullName>NAD(P)H-quinone oxidoreductase subunit 6, chloroplastic</fullName>
        <ecNumber>7.1.1.-</ecNumber>
    </recommendedName>
    <alternativeName>
        <fullName>NAD(P)H dehydrogenase subunit 6</fullName>
    </alternativeName>
    <alternativeName>
        <fullName>NADH-plastoquinone oxidoreductase subunit 6</fullName>
    </alternativeName>
</protein>
<keyword id="KW-0002">3D-structure</keyword>
<keyword id="KW-0150">Chloroplast</keyword>
<keyword id="KW-0472">Membrane</keyword>
<keyword id="KW-0520">NAD</keyword>
<keyword id="KW-0521">NADP</keyword>
<keyword id="KW-0934">Plastid</keyword>
<keyword id="KW-0618">Plastoquinone</keyword>
<keyword id="KW-0874">Quinone</keyword>
<keyword id="KW-1185">Reference proteome</keyword>
<keyword id="KW-0793">Thylakoid</keyword>
<keyword id="KW-1278">Translocase</keyword>
<keyword id="KW-0812">Transmembrane</keyword>
<keyword id="KW-1133">Transmembrane helix</keyword>
<keyword id="KW-0813">Transport</keyword>